<organism>
    <name type="scientific">Neorickettsia sennetsu (strain ATCC VR-367 / Miyayama)</name>
    <name type="common">Ehrlichia sennetsu</name>
    <dbReference type="NCBI Taxonomy" id="222891"/>
    <lineage>
        <taxon>Bacteria</taxon>
        <taxon>Pseudomonadati</taxon>
        <taxon>Pseudomonadota</taxon>
        <taxon>Alphaproteobacteria</taxon>
        <taxon>Rickettsiales</taxon>
        <taxon>Anaplasmataceae</taxon>
        <taxon>Neorickettsia</taxon>
    </lineage>
</organism>
<reference key="1">
    <citation type="journal article" date="2006" name="PLoS Genet.">
        <title>Comparative genomics of emerging human ehrlichiosis agents.</title>
        <authorList>
            <person name="Dunning Hotopp J.C."/>
            <person name="Lin M."/>
            <person name="Madupu R."/>
            <person name="Crabtree J."/>
            <person name="Angiuoli S.V."/>
            <person name="Eisen J.A."/>
            <person name="Seshadri R."/>
            <person name="Ren Q."/>
            <person name="Wu M."/>
            <person name="Utterback T.R."/>
            <person name="Smith S."/>
            <person name="Lewis M."/>
            <person name="Khouri H."/>
            <person name="Zhang C."/>
            <person name="Niu H."/>
            <person name="Lin Q."/>
            <person name="Ohashi N."/>
            <person name="Zhi N."/>
            <person name="Nelson W.C."/>
            <person name="Brinkac L.M."/>
            <person name="Dodson R.J."/>
            <person name="Rosovitz M.J."/>
            <person name="Sundaram J.P."/>
            <person name="Daugherty S.C."/>
            <person name="Davidsen T."/>
            <person name="Durkin A.S."/>
            <person name="Gwinn M.L."/>
            <person name="Haft D.H."/>
            <person name="Selengut J.D."/>
            <person name="Sullivan S.A."/>
            <person name="Zafar N."/>
            <person name="Zhou L."/>
            <person name="Benahmed F."/>
            <person name="Forberger H."/>
            <person name="Halpin R."/>
            <person name="Mulligan S."/>
            <person name="Robinson J."/>
            <person name="White O."/>
            <person name="Rikihisa Y."/>
            <person name="Tettelin H."/>
        </authorList>
    </citation>
    <scope>NUCLEOTIDE SEQUENCE [LARGE SCALE GENOMIC DNA]</scope>
    <source>
        <strain>ATCC VR-367 / Miyayama</strain>
    </source>
</reference>
<evidence type="ECO:0000255" key="1">
    <source>
        <dbReference type="HAMAP-Rule" id="MF_01302"/>
    </source>
</evidence>
<evidence type="ECO:0000305" key="2"/>
<keyword id="KW-0687">Ribonucleoprotein</keyword>
<keyword id="KW-0689">Ribosomal protein</keyword>
<keyword id="KW-0694">RNA-binding</keyword>
<keyword id="KW-0699">rRNA-binding</keyword>
<proteinExistence type="inferred from homology"/>
<feature type="chain" id="PRO_0000290887" description="Small ribosomal subunit protein uS8">
    <location>
        <begin position="1"/>
        <end position="131"/>
    </location>
</feature>
<gene>
    <name evidence="1" type="primary">rpsH</name>
    <name type="ordered locus">NSE_0280</name>
</gene>
<dbReference type="EMBL" id="CP000237">
    <property type="protein sequence ID" value="ABD46081.1"/>
    <property type="molecule type" value="Genomic_DNA"/>
</dbReference>
<dbReference type="RefSeq" id="WP_011451677.1">
    <property type="nucleotide sequence ID" value="NC_007798.1"/>
</dbReference>
<dbReference type="SMR" id="Q2GEC5"/>
<dbReference type="STRING" id="222891.NSE_0280"/>
<dbReference type="KEGG" id="nse:NSE_0280"/>
<dbReference type="eggNOG" id="COG0096">
    <property type="taxonomic scope" value="Bacteria"/>
</dbReference>
<dbReference type="HOGENOM" id="CLU_098428_0_0_5"/>
<dbReference type="OrthoDB" id="9802617at2"/>
<dbReference type="Proteomes" id="UP000001942">
    <property type="component" value="Chromosome"/>
</dbReference>
<dbReference type="GO" id="GO:1990904">
    <property type="term" value="C:ribonucleoprotein complex"/>
    <property type="evidence" value="ECO:0007669"/>
    <property type="project" value="UniProtKB-KW"/>
</dbReference>
<dbReference type="GO" id="GO:0005840">
    <property type="term" value="C:ribosome"/>
    <property type="evidence" value="ECO:0007669"/>
    <property type="project" value="UniProtKB-KW"/>
</dbReference>
<dbReference type="GO" id="GO:0019843">
    <property type="term" value="F:rRNA binding"/>
    <property type="evidence" value="ECO:0007669"/>
    <property type="project" value="UniProtKB-UniRule"/>
</dbReference>
<dbReference type="GO" id="GO:0003735">
    <property type="term" value="F:structural constituent of ribosome"/>
    <property type="evidence" value="ECO:0007669"/>
    <property type="project" value="InterPro"/>
</dbReference>
<dbReference type="GO" id="GO:0006412">
    <property type="term" value="P:translation"/>
    <property type="evidence" value="ECO:0007669"/>
    <property type="project" value="UniProtKB-UniRule"/>
</dbReference>
<dbReference type="FunFam" id="3.30.1490.10:FF:000001">
    <property type="entry name" value="30S ribosomal protein S8"/>
    <property type="match status" value="1"/>
</dbReference>
<dbReference type="Gene3D" id="3.30.1370.30">
    <property type="match status" value="1"/>
</dbReference>
<dbReference type="Gene3D" id="3.30.1490.10">
    <property type="match status" value="1"/>
</dbReference>
<dbReference type="HAMAP" id="MF_01302_B">
    <property type="entry name" value="Ribosomal_uS8_B"/>
    <property type="match status" value="1"/>
</dbReference>
<dbReference type="InterPro" id="IPR000630">
    <property type="entry name" value="Ribosomal_uS8"/>
</dbReference>
<dbReference type="InterPro" id="IPR035987">
    <property type="entry name" value="Ribosomal_uS8_sf"/>
</dbReference>
<dbReference type="NCBIfam" id="NF001109">
    <property type="entry name" value="PRK00136.1"/>
    <property type="match status" value="1"/>
</dbReference>
<dbReference type="PANTHER" id="PTHR11758">
    <property type="entry name" value="40S RIBOSOMAL PROTEIN S15A"/>
    <property type="match status" value="1"/>
</dbReference>
<dbReference type="Pfam" id="PF00410">
    <property type="entry name" value="Ribosomal_S8"/>
    <property type="match status" value="1"/>
</dbReference>
<dbReference type="SUPFAM" id="SSF56047">
    <property type="entry name" value="Ribosomal protein S8"/>
    <property type="match status" value="1"/>
</dbReference>
<sequence length="131" mass="14597">MPNSLIADAVARIRNGQMARLREVTIYHSRVLVEIAALLKEEGYIVGYEVIEIRPSVKRIIIRLKYYCGQPVISKLKLFSRPGKRIYSRACEIPKFYGGLGISVLSTSKGILPSYKAVSSNCGGELLFGVY</sequence>
<accession>Q2GEC5</accession>
<protein>
    <recommendedName>
        <fullName evidence="1">Small ribosomal subunit protein uS8</fullName>
    </recommendedName>
    <alternativeName>
        <fullName evidence="2">30S ribosomal protein S8</fullName>
    </alternativeName>
</protein>
<name>RS8_NEOSM</name>
<comment type="function">
    <text evidence="1">One of the primary rRNA binding proteins, it binds directly to 16S rRNA central domain where it helps coordinate assembly of the platform of the 30S subunit.</text>
</comment>
<comment type="subunit">
    <text evidence="1">Part of the 30S ribosomal subunit. Contacts proteins S5 and S12.</text>
</comment>
<comment type="similarity">
    <text evidence="1">Belongs to the universal ribosomal protein uS8 family.</text>
</comment>